<sequence length="60" mass="6628">MAVPKKKTSKSRKNMRRAHDFLTPPAASVCPQCKAPKLPHRACSSCGTYKGKEVIKSEEI</sequence>
<proteinExistence type="inferred from homology"/>
<accession>Q39V95</accession>
<dbReference type="EMBL" id="CP000148">
    <property type="protein sequence ID" value="ABB31829.1"/>
    <property type="molecule type" value="Genomic_DNA"/>
</dbReference>
<dbReference type="RefSeq" id="WP_004511468.1">
    <property type="nucleotide sequence ID" value="NC_007517.1"/>
</dbReference>
<dbReference type="SMR" id="Q39V95"/>
<dbReference type="STRING" id="269799.Gmet_1597"/>
<dbReference type="KEGG" id="gme:Gmet_1597"/>
<dbReference type="eggNOG" id="COG0333">
    <property type="taxonomic scope" value="Bacteria"/>
</dbReference>
<dbReference type="HOGENOM" id="CLU_129084_1_3_7"/>
<dbReference type="Proteomes" id="UP000007073">
    <property type="component" value="Chromosome"/>
</dbReference>
<dbReference type="GO" id="GO:0015934">
    <property type="term" value="C:large ribosomal subunit"/>
    <property type="evidence" value="ECO:0007669"/>
    <property type="project" value="InterPro"/>
</dbReference>
<dbReference type="GO" id="GO:0003735">
    <property type="term" value="F:structural constituent of ribosome"/>
    <property type="evidence" value="ECO:0007669"/>
    <property type="project" value="InterPro"/>
</dbReference>
<dbReference type="GO" id="GO:0006412">
    <property type="term" value="P:translation"/>
    <property type="evidence" value="ECO:0007669"/>
    <property type="project" value="UniProtKB-UniRule"/>
</dbReference>
<dbReference type="FunFam" id="1.20.5.640:FF:000001">
    <property type="entry name" value="50S ribosomal protein L32"/>
    <property type="match status" value="1"/>
</dbReference>
<dbReference type="Gene3D" id="1.20.5.640">
    <property type="entry name" value="Single helix bin"/>
    <property type="match status" value="1"/>
</dbReference>
<dbReference type="HAMAP" id="MF_00340">
    <property type="entry name" value="Ribosomal_bL32"/>
    <property type="match status" value="1"/>
</dbReference>
<dbReference type="InterPro" id="IPR002677">
    <property type="entry name" value="Ribosomal_bL32"/>
</dbReference>
<dbReference type="InterPro" id="IPR044957">
    <property type="entry name" value="Ribosomal_bL32_bact"/>
</dbReference>
<dbReference type="InterPro" id="IPR011332">
    <property type="entry name" value="Ribosomal_zn-bd"/>
</dbReference>
<dbReference type="NCBIfam" id="TIGR01031">
    <property type="entry name" value="rpmF_bact"/>
    <property type="match status" value="1"/>
</dbReference>
<dbReference type="PANTHER" id="PTHR35534">
    <property type="entry name" value="50S RIBOSOMAL PROTEIN L32"/>
    <property type="match status" value="1"/>
</dbReference>
<dbReference type="PANTHER" id="PTHR35534:SF1">
    <property type="entry name" value="LARGE RIBOSOMAL SUBUNIT PROTEIN BL32"/>
    <property type="match status" value="1"/>
</dbReference>
<dbReference type="Pfam" id="PF01783">
    <property type="entry name" value="Ribosomal_L32p"/>
    <property type="match status" value="1"/>
</dbReference>
<dbReference type="SUPFAM" id="SSF57829">
    <property type="entry name" value="Zn-binding ribosomal proteins"/>
    <property type="match status" value="1"/>
</dbReference>
<protein>
    <recommendedName>
        <fullName evidence="1">Large ribosomal subunit protein bL32</fullName>
    </recommendedName>
    <alternativeName>
        <fullName evidence="3">50S ribosomal protein L32</fullName>
    </alternativeName>
</protein>
<keyword id="KW-1185">Reference proteome</keyword>
<keyword id="KW-0687">Ribonucleoprotein</keyword>
<keyword id="KW-0689">Ribosomal protein</keyword>
<evidence type="ECO:0000255" key="1">
    <source>
        <dbReference type="HAMAP-Rule" id="MF_00340"/>
    </source>
</evidence>
<evidence type="ECO:0000256" key="2">
    <source>
        <dbReference type="SAM" id="MobiDB-lite"/>
    </source>
</evidence>
<evidence type="ECO:0000305" key="3"/>
<name>RL32_GEOMG</name>
<reference key="1">
    <citation type="journal article" date="2009" name="BMC Microbiol.">
        <title>The genome sequence of Geobacter metallireducens: features of metabolism, physiology and regulation common and dissimilar to Geobacter sulfurreducens.</title>
        <authorList>
            <person name="Aklujkar M."/>
            <person name="Krushkal J."/>
            <person name="DiBartolo G."/>
            <person name="Lapidus A."/>
            <person name="Land M.L."/>
            <person name="Lovley D.R."/>
        </authorList>
    </citation>
    <scope>NUCLEOTIDE SEQUENCE [LARGE SCALE GENOMIC DNA]</scope>
    <source>
        <strain>ATCC 53774 / DSM 7210 / GS-15</strain>
    </source>
</reference>
<gene>
    <name evidence="1" type="primary">rpmF</name>
    <name type="ordered locus">Gmet_1597</name>
</gene>
<comment type="similarity">
    <text evidence="1">Belongs to the bacterial ribosomal protein bL32 family.</text>
</comment>
<feature type="chain" id="PRO_0000296471" description="Large ribosomal subunit protein bL32">
    <location>
        <begin position="1"/>
        <end position="60"/>
    </location>
</feature>
<feature type="region of interest" description="Disordered" evidence="2">
    <location>
        <begin position="1"/>
        <end position="20"/>
    </location>
</feature>
<feature type="compositionally biased region" description="Basic residues" evidence="2">
    <location>
        <begin position="1"/>
        <end position="16"/>
    </location>
</feature>
<organism>
    <name type="scientific">Geobacter metallireducens (strain ATCC 53774 / DSM 7210 / GS-15)</name>
    <dbReference type="NCBI Taxonomy" id="269799"/>
    <lineage>
        <taxon>Bacteria</taxon>
        <taxon>Pseudomonadati</taxon>
        <taxon>Thermodesulfobacteriota</taxon>
        <taxon>Desulfuromonadia</taxon>
        <taxon>Geobacterales</taxon>
        <taxon>Geobacteraceae</taxon>
        <taxon>Geobacter</taxon>
    </lineage>
</organism>